<keyword id="KW-0963">Cytoplasm</keyword>
<keyword id="KW-0378">Hydrolase</keyword>
<keyword id="KW-0484">Methanogenesis</keyword>
<keyword id="KW-0554">One-carbon metabolism</keyword>
<keyword id="KW-1185">Reference proteome</keyword>
<name>MCH_METAR</name>
<gene>
    <name evidence="1" type="primary">mch</name>
    <name type="ordered locus">UNCMA_29790</name>
    <name type="ORF">LRC191</name>
</gene>
<accession>Q0W8U9</accession>
<reference key="1">
    <citation type="journal article" date="2006" name="Science">
        <title>Genome of rice cluster I archaea -- the key methane producers in the rice rhizosphere.</title>
        <authorList>
            <person name="Erkel C."/>
            <person name="Kube M."/>
            <person name="Reinhardt R."/>
            <person name="Liesack W."/>
        </authorList>
    </citation>
    <scope>NUCLEOTIDE SEQUENCE [LARGE SCALE GENOMIC DNA]</scope>
    <source>
        <strain>DSM 22066 / NBRC 105507 / MRE50</strain>
    </source>
</reference>
<dbReference type="EC" id="3.5.4.27" evidence="1"/>
<dbReference type="EMBL" id="AM114193">
    <property type="protein sequence ID" value="CAJ35194.1"/>
    <property type="molecule type" value="Genomic_DNA"/>
</dbReference>
<dbReference type="RefSeq" id="WP_012037294.1">
    <property type="nucleotide sequence ID" value="NC_009464.1"/>
</dbReference>
<dbReference type="SMR" id="Q0W8U9"/>
<dbReference type="STRING" id="351160.LRC191"/>
<dbReference type="GeneID" id="5143584"/>
<dbReference type="KEGG" id="rci:LRC191"/>
<dbReference type="PATRIC" id="fig|351160.9.peg.3064"/>
<dbReference type="eggNOG" id="arCOG02675">
    <property type="taxonomic scope" value="Archaea"/>
</dbReference>
<dbReference type="OrthoDB" id="105468at2157"/>
<dbReference type="UniPathway" id="UPA00640">
    <property type="reaction ID" value="UER00694"/>
</dbReference>
<dbReference type="Proteomes" id="UP000000663">
    <property type="component" value="Chromosome"/>
</dbReference>
<dbReference type="GO" id="GO:0005737">
    <property type="term" value="C:cytoplasm"/>
    <property type="evidence" value="ECO:0007669"/>
    <property type="project" value="UniProtKB-SubCell"/>
</dbReference>
<dbReference type="GO" id="GO:0018759">
    <property type="term" value="F:methenyltetrahydromethanopterin cyclohydrolase activity"/>
    <property type="evidence" value="ECO:0007669"/>
    <property type="project" value="UniProtKB-UniRule"/>
</dbReference>
<dbReference type="GO" id="GO:0019386">
    <property type="term" value="P:methanogenesis, from carbon dioxide"/>
    <property type="evidence" value="ECO:0007669"/>
    <property type="project" value="UniProtKB-UniRule"/>
</dbReference>
<dbReference type="GO" id="GO:0006730">
    <property type="term" value="P:one-carbon metabolic process"/>
    <property type="evidence" value="ECO:0007669"/>
    <property type="project" value="UniProtKB-UniRule"/>
</dbReference>
<dbReference type="CDD" id="cd00545">
    <property type="entry name" value="MCH"/>
    <property type="match status" value="1"/>
</dbReference>
<dbReference type="Gene3D" id="3.10.340.11">
    <property type="entry name" value="Methenyltetrahydromethanopterin Cyclohydrolase, Chain A, domain 1"/>
    <property type="match status" value="1"/>
</dbReference>
<dbReference type="Gene3D" id="3.30.1030.10">
    <property type="entry name" value="Methenyltetrahydromethanopterin Cyclohydrolase, Chain A, domain 2"/>
    <property type="match status" value="1"/>
</dbReference>
<dbReference type="HAMAP" id="MF_00486">
    <property type="entry name" value="McH"/>
    <property type="match status" value="1"/>
</dbReference>
<dbReference type="InterPro" id="IPR003209">
    <property type="entry name" value="METHMP_CycHdrlase"/>
</dbReference>
<dbReference type="NCBIfam" id="TIGR03120">
    <property type="entry name" value="one_C_mch"/>
    <property type="match status" value="1"/>
</dbReference>
<dbReference type="Pfam" id="PF02289">
    <property type="entry name" value="MCH"/>
    <property type="match status" value="1"/>
</dbReference>
<dbReference type="SUPFAM" id="SSF56199">
    <property type="entry name" value="Methenyltetrahydromethanopterin cyclohydrolase"/>
    <property type="match status" value="1"/>
</dbReference>
<protein>
    <recommendedName>
        <fullName evidence="1">Methenyltetrahydromethanopterin cyclohydrolase</fullName>
        <ecNumber evidence="1">3.5.4.27</ecNumber>
    </recommendedName>
    <alternativeName>
        <fullName evidence="1">Methenyl-H4MPT cyclohydrolase</fullName>
    </alternativeName>
</protein>
<feature type="chain" id="PRO_1000014406" description="Methenyltetrahydromethanopterin cyclohydrolase">
    <location>
        <begin position="1"/>
        <end position="318"/>
    </location>
</feature>
<organism>
    <name type="scientific">Methanocella arvoryzae (strain DSM 22066 / NBRC 105507 / MRE50)</name>
    <dbReference type="NCBI Taxonomy" id="351160"/>
    <lineage>
        <taxon>Archaea</taxon>
        <taxon>Methanobacteriati</taxon>
        <taxon>Methanobacteriota</taxon>
        <taxon>Stenosarchaea group</taxon>
        <taxon>Methanomicrobia</taxon>
        <taxon>Methanocellales</taxon>
        <taxon>Methanocellaceae</taxon>
        <taxon>Methanocella</taxon>
    </lineage>
</organism>
<comment type="function">
    <text evidence="1">Catalyzes the reversible interconversion of 5-formyl-H(4)MPT to methenyl-H(4)MPT(+).</text>
</comment>
<comment type="catalytic activity">
    <reaction evidence="1">
        <text>5,10-methenyl-5,6,7,8-tetrahydromethanopterin + H2O = N(5)-formyl-5,6,7,8-tetrahydromethanopterin + H(+)</text>
        <dbReference type="Rhea" id="RHEA:19053"/>
        <dbReference type="ChEBI" id="CHEBI:15377"/>
        <dbReference type="ChEBI" id="CHEBI:15378"/>
        <dbReference type="ChEBI" id="CHEBI:58018"/>
        <dbReference type="ChEBI" id="CHEBI:58337"/>
        <dbReference type="EC" id="3.5.4.27"/>
    </reaction>
</comment>
<comment type="pathway">
    <text evidence="1">One-carbon metabolism; methanogenesis from CO(2); 5,10-methenyl-5,6,7,8-tetrahydromethanopterin from CO(2): step 3/3.</text>
</comment>
<comment type="subcellular location">
    <subcellularLocation>
        <location evidence="1">Cytoplasm</location>
    </subcellularLocation>
</comment>
<comment type="similarity">
    <text evidence="1">Belongs to the MCH family.</text>
</comment>
<evidence type="ECO:0000255" key="1">
    <source>
        <dbReference type="HAMAP-Rule" id="MF_00486"/>
    </source>
</evidence>
<proteinExistence type="inferred from homology"/>
<sequence length="318" mass="34455">MISINEISYSIVEEMLDFAEDYRIEPHTLANDSVVIDCGVKAKAGYEAGLLFTQVCMGGLAQTSLTHKKLKHEVFYPFIEVSTDFPAIACLAAQKAGWRISQDGYFAMGSGPARALALKPKHTYEVIEYEDDYDFAVIALEADKLPNEKVMDYIASECGVDSSDVVALVAPTNSPVGSVQIAGRVVEMAIYKLAELGFDTRHIVSAFGSAPIPPVKKDAAVAMGTTNDASIYHGSVTLTVDGGNIKDFVPKIPSSTSKDYGKPFYTVFKEAKFDFYKLDPGIFAPAEVVVNDISTGETYIAGKINADVCMESFGFKKL</sequence>